<organism>
    <name type="scientific">Human metapneumovirus (strain CAN97-83)</name>
    <name type="common">HMPV</name>
    <dbReference type="NCBI Taxonomy" id="694067"/>
    <lineage>
        <taxon>Viruses</taxon>
        <taxon>Riboviria</taxon>
        <taxon>Orthornavirae</taxon>
        <taxon>Negarnaviricota</taxon>
        <taxon>Haploviricotina</taxon>
        <taxon>Monjiviricetes</taxon>
        <taxon>Mononegavirales</taxon>
        <taxon>Pneumoviridae</taxon>
        <taxon>Metapneumovirus</taxon>
        <taxon>Metapneumovirus hominis</taxon>
    </lineage>
</organism>
<dbReference type="EMBL" id="AY297749">
    <property type="protein sequence ID" value="AAQ67699.1"/>
    <property type="molecule type" value="Genomic_RNA"/>
</dbReference>
<dbReference type="EMBL" id="AY485253">
    <property type="protein sequence ID" value="AAS48485.1"/>
    <property type="molecule type" value="Genomic_RNA"/>
</dbReference>
<dbReference type="RefSeq" id="YP_012612.1">
    <property type="nucleotide sequence ID" value="NC_004148.2"/>
</dbReference>
<dbReference type="IntAct" id="Q6WB94">
    <property type="interactions" value="2"/>
</dbReference>
<dbReference type="GlyCosmos" id="Q6WB94">
    <property type="glycosylation" value="1 site, No reported glycans"/>
</dbReference>
<dbReference type="Proteomes" id="UP000001398">
    <property type="component" value="Segment"/>
</dbReference>
<dbReference type="GO" id="GO:0033644">
    <property type="term" value="C:host cell membrane"/>
    <property type="evidence" value="ECO:0007669"/>
    <property type="project" value="UniProtKB-SubCell"/>
</dbReference>
<dbReference type="GO" id="GO:0016020">
    <property type="term" value="C:membrane"/>
    <property type="evidence" value="ECO:0007669"/>
    <property type="project" value="UniProtKB-KW"/>
</dbReference>
<dbReference type="GO" id="GO:0044423">
    <property type="term" value="C:virion component"/>
    <property type="evidence" value="ECO:0007669"/>
    <property type="project" value="UniProtKB-KW"/>
</dbReference>
<dbReference type="GO" id="GO:0046718">
    <property type="term" value="P:symbiont entry into host cell"/>
    <property type="evidence" value="ECO:0007669"/>
    <property type="project" value="UniProtKB-KW"/>
</dbReference>
<dbReference type="GO" id="GO:0039540">
    <property type="term" value="P:symbiont-mediated suppression of host cytoplasmic pattern recognition receptor signaling pathway via inhibition of RIG-I activity"/>
    <property type="evidence" value="ECO:0007669"/>
    <property type="project" value="UniProtKB-KW"/>
</dbReference>
<dbReference type="GO" id="GO:0019062">
    <property type="term" value="P:virion attachment to host cell"/>
    <property type="evidence" value="ECO:0007669"/>
    <property type="project" value="UniProtKB-KW"/>
</dbReference>
<dbReference type="InterPro" id="IPR018585">
    <property type="entry name" value="Metaviral_G_glycop"/>
</dbReference>
<dbReference type="Pfam" id="PF09595">
    <property type="entry name" value="Metaviral_G"/>
    <property type="match status" value="1"/>
</dbReference>
<accession>Q6WB94</accession>
<proteinExistence type="evidence at protein level"/>
<keyword id="KW-0325">Glycoprotein</keyword>
<keyword id="KW-1043">Host membrane</keyword>
<keyword id="KW-0945">Host-virus interaction</keyword>
<keyword id="KW-1090">Inhibition of host innate immune response by virus</keyword>
<keyword id="KW-1088">Inhibition of host RIG-I by virus</keyword>
<keyword id="KW-1113">Inhibition of host RLR pathway by virus</keyword>
<keyword id="KW-0472">Membrane</keyword>
<keyword id="KW-1185">Reference proteome</keyword>
<keyword id="KW-0735">Signal-anchor</keyword>
<keyword id="KW-0812">Transmembrane</keyword>
<keyword id="KW-1133">Transmembrane helix</keyword>
<keyword id="KW-1161">Viral attachment to host cell</keyword>
<keyword id="KW-0899">Viral immunoevasion</keyword>
<keyword id="KW-0946">Virion</keyword>
<keyword id="KW-1160">Virus entry into host cell</keyword>
<organismHost>
    <name type="scientific">Homo sapiens</name>
    <name type="common">Human</name>
    <dbReference type="NCBI Taxonomy" id="9606"/>
</organismHost>
<comment type="function">
    <text evidence="5">Attaches the virion to the host cell membrane by interacting with glycosaminoglycans, initiating the infection. Unlike other paramyxovirus attachment proteins, lacks both neuraminidase and hemagglutinating activities. In addition to its role in attachment, glycoprotein G interacts with host RIGI and inhibits RIGI-mediated signaling pathway in order to prevent the establishment of the antiviral state.</text>
</comment>
<comment type="subunit">
    <text evidence="1 4">Homooligomer. Interacts (via N-terminus) with protein M. Interacts with protein F; this interaction occurs on the surface of infected cells. Interacts with protein SH (By similarity). Interacts with host RIGI; this interaction inhibits host immune response.</text>
</comment>
<comment type="subcellular location">
    <subcellularLocation>
        <location evidence="6">Host membrane</location>
        <topology evidence="6">Single-pass type I membrane protein</topology>
    </subcellularLocation>
    <subcellularLocation>
        <location>Virion</location>
    </subcellularLocation>
</comment>
<comment type="similarity">
    <text evidence="6">Belongs to the metapneumoviruses glycoprotein G family.</text>
</comment>
<protein>
    <recommendedName>
        <fullName>Major surface glycoprotein G</fullName>
    </recommendedName>
    <alternativeName>
        <fullName>Attachment glycoprotein G</fullName>
    </alternativeName>
    <alternativeName>
        <fullName>Membrane-bound glycoprotein</fullName>
        <shortName>mG</shortName>
    </alternativeName>
</protein>
<gene>
    <name type="primary">G</name>
</gene>
<name>VGLG_HMPVC</name>
<evidence type="ECO:0000250" key="1"/>
<evidence type="ECO:0000255" key="2"/>
<evidence type="ECO:0000256" key="3">
    <source>
        <dbReference type="SAM" id="MobiDB-lite"/>
    </source>
</evidence>
<evidence type="ECO:0000269" key="4">
    <source>
    </source>
</evidence>
<evidence type="ECO:0000269" key="5">
    <source>
    </source>
</evidence>
<evidence type="ECO:0000305" key="6"/>
<reference key="1">
    <citation type="journal article" date="2003" name="Virology">
        <title>Genetic diversity between human metapneumovirus subgroups.</title>
        <authorList>
            <person name="Biacchesi S."/>
            <person name="Skiadopoulos M.H."/>
            <person name="Boivin G."/>
            <person name="Hanson C.T."/>
            <person name="Murphy B.R."/>
            <person name="Collins P.L."/>
            <person name="Buchholz U.J."/>
        </authorList>
    </citation>
    <scope>NUCLEOTIDE SEQUENCE [GENOMIC RNA]</scope>
</reference>
<reference key="2">
    <citation type="journal article" date="2005" name="J. Virol.">
        <title>Chimeric recombinant human metapneumoviruses with the nucleoprotein or phosphoprotein open reading frame replaced by that of avian metapneumovirus exhibit improved growth in vitro and attenuation in vivo.</title>
        <authorList>
            <person name="Pham Q.N."/>
            <person name="Biacchesi S."/>
            <person name="Skiadopoulos M.H."/>
            <person name="Murphy B.R."/>
            <person name="Collins P.L."/>
            <person name="Buchholz U.J."/>
        </authorList>
    </citation>
    <scope>NUCLEOTIDE SEQUENCE [GENOMIC RNA]</scope>
</reference>
<reference key="3">
    <citation type="journal article" date="2004" name="J. Gen. Virol.">
        <title>Sequence polymorphism of the predicted human metapneumovirus G glycoprotein.</title>
        <authorList>
            <person name="Peret T.C."/>
            <person name="Abed Y."/>
            <person name="Anderson L.J."/>
            <person name="Erdman D.D."/>
            <person name="Boivin G."/>
        </authorList>
    </citation>
    <scope>NUCLEOTIDE SEQUENCE [GENOMIC RNA]</scope>
</reference>
<reference key="4">
    <citation type="submission" date="2003-11" db="EMBL/GenBank/DDBJ databases">
        <authorList>
            <person name="Peret T.C.T."/>
            <person name="Abed Y."/>
            <person name="Erdman D.D."/>
            <person name="Anderson L.J."/>
            <person name="Boivin G."/>
        </authorList>
    </citation>
    <scope>NUCLEOTIDE SEQUENCE [GENOMIC RNA]</scope>
</reference>
<reference key="5">
    <citation type="journal article" date="2008" name="PLoS Pathog.">
        <title>Human metapneumovirus glycoprotein G inhibits innate immune responses.</title>
        <authorList>
            <person name="Bao X."/>
            <person name="Liu T."/>
            <person name="Shan Y."/>
            <person name="Li K."/>
            <person name="Garofalo R.P."/>
            <person name="Casola A."/>
        </authorList>
    </citation>
    <scope>INTERACTION WITH HOST RIGI</scope>
</reference>
<reference key="6">
    <citation type="journal article" date="2008" name="J. Virol.">
        <title>Role of cellular glycosaminoglycans and charged regions of viral G protein in human metapneumovirus infection.</title>
        <authorList>
            <person name="Thammawat S."/>
            <person name="Sadlon T.A."/>
            <person name="Hallsworth P.G."/>
            <person name="Gordon D.L."/>
        </authorList>
    </citation>
    <scope>FUNCTION</scope>
</reference>
<feature type="chain" id="PRO_0000394814" description="Major surface glycoprotein G">
    <location>
        <begin position="1"/>
        <end position="219"/>
    </location>
</feature>
<feature type="topological domain" description="Intravirion" evidence="2">
    <location>
        <begin position="1"/>
        <end position="30"/>
    </location>
</feature>
<feature type="transmembrane region" description="Helical" evidence="2">
    <location>
        <begin position="31"/>
        <end position="51"/>
    </location>
</feature>
<feature type="topological domain" description="Virion surface" evidence="2">
    <location>
        <begin position="52"/>
        <end position="219"/>
    </location>
</feature>
<feature type="region of interest" description="Disordered" evidence="3">
    <location>
        <begin position="58"/>
        <end position="219"/>
    </location>
</feature>
<feature type="compositionally biased region" description="Polar residues" evidence="3">
    <location>
        <begin position="76"/>
        <end position="142"/>
    </location>
</feature>
<feature type="compositionally biased region" description="Polar residues" evidence="3">
    <location>
        <begin position="149"/>
        <end position="164"/>
    </location>
</feature>
<feature type="compositionally biased region" description="Low complexity" evidence="3">
    <location>
        <begin position="165"/>
        <end position="178"/>
    </location>
</feature>
<feature type="compositionally biased region" description="Low complexity" evidence="3">
    <location>
        <begin position="187"/>
        <end position="199"/>
    </location>
</feature>
<feature type="compositionally biased region" description="Polar residues" evidence="3">
    <location>
        <begin position="206"/>
        <end position="219"/>
    </location>
</feature>
<feature type="glycosylation site" description="N-linked (GlcNAc...) asparagine; by host" evidence="2">
    <location>
        <position position="52"/>
    </location>
</feature>
<sequence length="219" mass="23668">MEVKVENIRAIDMLKARVKNRVARSKCFKNASLILIGITTLSIALNIYLIINYTIQKTSSESEHHTSSPPTESNKEASTISTDNPDINPNSQHPTQQSTENPTLNPAASVSPSETEPASTPDTTNRLSSVDRSTAQPSESRTKTKPTVHTRNNPSTASSTQSPPRATTKAIRRATTFRMSSTGKRPTTTSVQSDSSTTTQNHEETGSANPQASVSTMQN</sequence>